<dbReference type="EC" id="5.6.2.3" evidence="2 6"/>
<dbReference type="EMBL" id="U00062">
    <property type="protein sequence ID" value="AAB68913.1"/>
    <property type="molecule type" value="Genomic_DNA"/>
</dbReference>
<dbReference type="EMBL" id="BK006934">
    <property type="protein sequence ID" value="DAA06722.1"/>
    <property type="molecule type" value="Genomic_DNA"/>
</dbReference>
<dbReference type="PIR" id="S46744">
    <property type="entry name" value="S46744"/>
</dbReference>
<dbReference type="RefSeq" id="NP_011896.1">
    <property type="nucleotide sequence ID" value="NM_001179161.1"/>
</dbReference>
<dbReference type="SMR" id="P38766"/>
<dbReference type="BioGRID" id="36462">
    <property type="interactions" value="365"/>
</dbReference>
<dbReference type="DIP" id="DIP-2858N"/>
<dbReference type="ELM" id="P38766"/>
<dbReference type="FunCoup" id="P38766">
    <property type="interactions" value="996"/>
</dbReference>
<dbReference type="IntAct" id="P38766">
    <property type="interactions" value="6"/>
</dbReference>
<dbReference type="MINT" id="P38766"/>
<dbReference type="STRING" id="4932.YHR031C"/>
<dbReference type="GlyGen" id="P38766">
    <property type="glycosylation" value="1 site"/>
</dbReference>
<dbReference type="iPTMnet" id="P38766"/>
<dbReference type="PaxDb" id="4932-YHR031C"/>
<dbReference type="PeptideAtlas" id="P38766"/>
<dbReference type="EnsemblFungi" id="YHR031C_mRNA">
    <property type="protein sequence ID" value="YHR031C"/>
    <property type="gene ID" value="YHR031C"/>
</dbReference>
<dbReference type="GeneID" id="856426"/>
<dbReference type="KEGG" id="sce:YHR031C"/>
<dbReference type="AGR" id="SGD:S000001073"/>
<dbReference type="SGD" id="S000001073">
    <property type="gene designation" value="RRM3"/>
</dbReference>
<dbReference type="VEuPathDB" id="FungiDB:YHR031C"/>
<dbReference type="eggNOG" id="KOG0987">
    <property type="taxonomic scope" value="Eukaryota"/>
</dbReference>
<dbReference type="HOGENOM" id="CLU_001613_0_2_1"/>
<dbReference type="InParanoid" id="P38766"/>
<dbReference type="OMA" id="VFRQQDN"/>
<dbReference type="OrthoDB" id="432234at2759"/>
<dbReference type="BioCyc" id="YEAST:G3O-31091-MONOMER"/>
<dbReference type="BioGRID-ORCS" id="856426">
    <property type="hits" value="0 hits in 10 CRISPR screens"/>
</dbReference>
<dbReference type="PRO" id="PR:P38766"/>
<dbReference type="Proteomes" id="UP000002311">
    <property type="component" value="Chromosome VIII"/>
</dbReference>
<dbReference type="RNAct" id="P38766">
    <property type="molecule type" value="protein"/>
</dbReference>
<dbReference type="GO" id="GO:0000781">
    <property type="term" value="C:chromosome, telomeric region"/>
    <property type="evidence" value="ECO:0007669"/>
    <property type="project" value="UniProtKB-SubCell"/>
</dbReference>
<dbReference type="GO" id="GO:0005739">
    <property type="term" value="C:mitochondrion"/>
    <property type="evidence" value="ECO:0000318"/>
    <property type="project" value="GO_Central"/>
</dbReference>
<dbReference type="GO" id="GO:0043596">
    <property type="term" value="C:nuclear replication fork"/>
    <property type="evidence" value="ECO:0000314"/>
    <property type="project" value="SGD"/>
</dbReference>
<dbReference type="GO" id="GO:0005657">
    <property type="term" value="C:replication fork"/>
    <property type="evidence" value="ECO:0000314"/>
    <property type="project" value="SGD"/>
</dbReference>
<dbReference type="GO" id="GO:0043139">
    <property type="term" value="F:5'-3' DNA helicase activity"/>
    <property type="evidence" value="ECO:0000318"/>
    <property type="project" value="GO_Central"/>
</dbReference>
<dbReference type="GO" id="GO:0005524">
    <property type="term" value="F:ATP binding"/>
    <property type="evidence" value="ECO:0007669"/>
    <property type="project" value="UniProtKB-UniRule"/>
</dbReference>
<dbReference type="GO" id="GO:0016887">
    <property type="term" value="F:ATP hydrolysis activity"/>
    <property type="evidence" value="ECO:0007669"/>
    <property type="project" value="InterPro"/>
</dbReference>
<dbReference type="GO" id="GO:0019237">
    <property type="term" value="F:centromeric DNA binding"/>
    <property type="evidence" value="ECO:0000314"/>
    <property type="project" value="SGD"/>
</dbReference>
<dbReference type="GO" id="GO:0003678">
    <property type="term" value="F:DNA helicase activity"/>
    <property type="evidence" value="ECO:0000314"/>
    <property type="project" value="SGD"/>
</dbReference>
<dbReference type="GO" id="GO:0051880">
    <property type="term" value="F:G-quadruplex DNA binding"/>
    <property type="evidence" value="ECO:0007669"/>
    <property type="project" value="UniProtKB-UniRule"/>
</dbReference>
<dbReference type="GO" id="GO:0003697">
    <property type="term" value="F:single-stranded DNA binding"/>
    <property type="evidence" value="ECO:0000318"/>
    <property type="project" value="GO_Central"/>
</dbReference>
<dbReference type="GO" id="GO:0006281">
    <property type="term" value="P:DNA repair"/>
    <property type="evidence" value="ECO:0007669"/>
    <property type="project" value="UniProtKB-UniRule"/>
</dbReference>
<dbReference type="GO" id="GO:0006260">
    <property type="term" value="P:DNA replication"/>
    <property type="evidence" value="ECO:0000315"/>
    <property type="project" value="SGD"/>
</dbReference>
<dbReference type="GO" id="GO:0000002">
    <property type="term" value="P:mitochondrial genome maintenance"/>
    <property type="evidence" value="ECO:0000316"/>
    <property type="project" value="SGD"/>
</dbReference>
<dbReference type="GO" id="GO:0097046">
    <property type="term" value="P:replication fork progression beyond termination site"/>
    <property type="evidence" value="ECO:0000315"/>
    <property type="project" value="SGD"/>
</dbReference>
<dbReference type="GO" id="GO:0071932">
    <property type="term" value="P:replication fork reversal"/>
    <property type="evidence" value="ECO:0000316"/>
    <property type="project" value="SGD"/>
</dbReference>
<dbReference type="GO" id="GO:0000723">
    <property type="term" value="P:telomere maintenance"/>
    <property type="evidence" value="ECO:0000318"/>
    <property type="project" value="GO_Central"/>
</dbReference>
<dbReference type="CDD" id="cd18037">
    <property type="entry name" value="DEXSc_Pif1_like"/>
    <property type="match status" value="1"/>
</dbReference>
<dbReference type="CDD" id="cd18809">
    <property type="entry name" value="SF1_C_RecD"/>
    <property type="match status" value="1"/>
</dbReference>
<dbReference type="FunFam" id="3.40.50.300:FF:001796">
    <property type="entry name" value="ATP-dependent DNA helicase PIF1"/>
    <property type="match status" value="1"/>
</dbReference>
<dbReference type="Gene3D" id="3.40.50.300">
    <property type="entry name" value="P-loop containing nucleotide triphosphate hydrolases"/>
    <property type="match status" value="1"/>
</dbReference>
<dbReference type="HAMAP" id="MF_03176">
    <property type="entry name" value="PIF1"/>
    <property type="match status" value="1"/>
</dbReference>
<dbReference type="HAMAP" id="MF_03177">
    <property type="entry name" value="RRM3"/>
    <property type="match status" value="1"/>
</dbReference>
<dbReference type="InterPro" id="IPR003593">
    <property type="entry name" value="AAA+_ATPase"/>
</dbReference>
<dbReference type="InterPro" id="IPR010285">
    <property type="entry name" value="DNA_helicase_pif1-like_DEAD"/>
</dbReference>
<dbReference type="InterPro" id="IPR027417">
    <property type="entry name" value="P-loop_NTPase"/>
</dbReference>
<dbReference type="InterPro" id="IPR051055">
    <property type="entry name" value="PIF1_helicase"/>
</dbReference>
<dbReference type="InterPro" id="IPR048293">
    <property type="entry name" value="PIF1_RRM3_pfh1"/>
</dbReference>
<dbReference type="InterPro" id="IPR028880">
    <property type="entry name" value="Rrm3"/>
</dbReference>
<dbReference type="PANTHER" id="PTHR47642">
    <property type="entry name" value="ATP-DEPENDENT DNA HELICASE"/>
    <property type="match status" value="1"/>
</dbReference>
<dbReference type="PANTHER" id="PTHR47642:SF5">
    <property type="entry name" value="ATP-DEPENDENT DNA HELICASE"/>
    <property type="match status" value="1"/>
</dbReference>
<dbReference type="Pfam" id="PF05970">
    <property type="entry name" value="PIF1"/>
    <property type="match status" value="1"/>
</dbReference>
<dbReference type="SMART" id="SM00382">
    <property type="entry name" value="AAA"/>
    <property type="match status" value="1"/>
</dbReference>
<dbReference type="SUPFAM" id="SSF52540">
    <property type="entry name" value="P-loop containing nucleoside triphosphate hydrolases"/>
    <property type="match status" value="2"/>
</dbReference>
<sequence>MFRSHASGNKKQWSKRSSNGSTPAASASGSHAYRQQTLSSFFMGCGKKSAAASKNSTTIIDLESGDEGNRNITAPPRPRLIRNNSSSLFSQSQGSFGDDDPDAEFKKLVDVPRLNSYKKSSRSLSMTSSLHKTASASTTQKTYHFDEDETLREVTSVKSNSRQLSFTSTINIEDSSMKLSTDSERPAKRSKPSMEFQGLKLTVPKKIKPLLRKTVSNMDSMNHRSASSPVVLTMEQERVVNLIVKKRTNVFYTGSAGTGKSVILQTIIRQLSSLYGKESIAITASTGLAAVTIGGSTLHKWSGIGIGNKTIDQLVKKIQSQKDLLAAWRYTKVLIIDEISMVDGNLLDKLEQIARRIRKNDDPFGGIQLVLTGDFFQLPPVAKKDEHNVVKFCFESEMWKRCIQKTILLTKVFRQQDNKLIDILNAIRYGELTVDIAKTIRNLNRDIDYADGIAPTELYATRREVELSNVKKLQSLPGDLYEFKAVDNAPERYQAILDSSLMVEKVVALKEDAQVMMLKNKPDVELVNGSLGKVLFFVTESLVVKMKEIYKIVDDEVVMDMRLVSRVIGNPLLKESKEFRQDLNARPLARLERLKILINYAVKISPHKEKFPYVRWTVGKNKYIHELMVPERFPIDIPRENVGLERTQIPLMLCWALSIHKAQGQTIQRLKVDLRRIFEAGQVYVALSRAVTMDTLQVLNFDPGKIRTNERVKDFYKRLETLK</sequence>
<comment type="function">
    <text evidence="4 5 6 8 10 11 12 13 14 15 16 17 18 20 21 22 23 24 25 26 27 28 29 30">5' to 3' DNA replicative helicase recruited to paused replisomes to promote fork progression throughout nonhistone protein-DNA complexes, naturally occurring impediments that are encountered in each S phase where replication forks pauses. Needed for normal fork progression through over 1000 discrete sites scattered throughout the genome, like rDNA, tRNA genes, centromeres, active replication origins, or transcriptional silencers. Required for timely replication of the telomere and subtelomeric DNA and for wild-type levels of telomeric silencing. Involved in regulation of Ty1 transposition and protects the genome from instability at nascent sites of retrotransposition. Involved in DNA repair during stalled replication fork, regulation of fragile sites expression and essential for genome stability. Also plays a role in mtDNA replication. Has G-quadruplex (G4) unwinding activity and can suppress G4-induced genome instability when PIF1 levels are low.</text>
</comment>
<comment type="catalytic activity">
    <reaction evidence="2 6">
        <text>Couples ATP hydrolysis with the unwinding of duplex DNA at the replication fork by translocating in the 5'-3' direction. This creates two antiparallel DNA single strands (ssDNA). The leading ssDNA polymer is the template for DNA polymerase III holoenzyme which synthesizes a continuous strand.</text>
        <dbReference type="EC" id="5.6.2.3"/>
    </reaction>
</comment>
<comment type="catalytic activity">
    <reaction evidence="2 6">
        <text>ATP + H2O = ADP + phosphate + H(+)</text>
        <dbReference type="Rhea" id="RHEA:13065"/>
        <dbReference type="ChEBI" id="CHEBI:15377"/>
        <dbReference type="ChEBI" id="CHEBI:15378"/>
        <dbReference type="ChEBI" id="CHEBI:30616"/>
        <dbReference type="ChEBI" id="CHEBI:43474"/>
        <dbReference type="ChEBI" id="CHEBI:456216"/>
        <dbReference type="EC" id="5.6.2.3"/>
    </reaction>
</comment>
<comment type="subunit">
    <text evidence="7 19">Interacts with DEF1 (PubMed:15863512) and POL30 (PubMed:12239216).</text>
</comment>
<comment type="subcellular location">
    <subcellularLocation>
        <location>Nucleus</location>
    </subcellularLocation>
    <subcellularLocation>
        <location>Chromosome</location>
        <location>Telomere</location>
    </subcellularLocation>
</comment>
<comment type="domain">
    <text evidence="16">The N-terminal part (residues 1 to 249) is essential for function and confers locus specificity.</text>
</comment>
<comment type="miscellaneous">
    <text evidence="9">Present with 656 molecules/cell in log phase SD medium.</text>
</comment>
<comment type="similarity">
    <text evidence="31">Belongs to the helicase family.</text>
</comment>
<keyword id="KW-0067">ATP-binding</keyword>
<keyword id="KW-0158">Chromosome</keyword>
<keyword id="KW-0227">DNA damage</keyword>
<keyword id="KW-0234">DNA repair</keyword>
<keyword id="KW-0238">DNA-binding</keyword>
<keyword id="KW-0347">Helicase</keyword>
<keyword id="KW-0378">Hydrolase</keyword>
<keyword id="KW-0413">Isomerase</keyword>
<keyword id="KW-0547">Nucleotide-binding</keyword>
<keyword id="KW-0539">Nucleus</keyword>
<keyword id="KW-0597">Phosphoprotein</keyword>
<keyword id="KW-1185">Reference proteome</keyword>
<keyword id="KW-0779">Telomere</keyword>
<evidence type="ECO:0000255" key="1">
    <source>
        <dbReference type="HAMAP-Rule" id="MF_03176"/>
    </source>
</evidence>
<evidence type="ECO:0000255" key="2">
    <source>
        <dbReference type="HAMAP-Rule" id="MF_03177"/>
    </source>
</evidence>
<evidence type="ECO:0000256" key="3">
    <source>
        <dbReference type="SAM" id="MobiDB-lite"/>
    </source>
</evidence>
<evidence type="ECO:0000269" key="4">
    <source>
    </source>
</evidence>
<evidence type="ECO:0000269" key="5">
    <source>
    </source>
</evidence>
<evidence type="ECO:0000269" key="6">
    <source>
    </source>
</evidence>
<evidence type="ECO:0000269" key="7">
    <source>
    </source>
</evidence>
<evidence type="ECO:0000269" key="8">
    <source>
    </source>
</evidence>
<evidence type="ECO:0000269" key="9">
    <source>
    </source>
</evidence>
<evidence type="ECO:0000269" key="10">
    <source>
    </source>
</evidence>
<evidence type="ECO:0000269" key="11">
    <source>
    </source>
</evidence>
<evidence type="ECO:0000269" key="12">
    <source>
    </source>
</evidence>
<evidence type="ECO:0000269" key="13">
    <source>
    </source>
</evidence>
<evidence type="ECO:0000269" key="14">
    <source>
    </source>
</evidence>
<evidence type="ECO:0000269" key="15">
    <source>
    </source>
</evidence>
<evidence type="ECO:0000269" key="16">
    <source>
    </source>
</evidence>
<evidence type="ECO:0000269" key="17">
    <source>
    </source>
</evidence>
<evidence type="ECO:0000269" key="18">
    <source>
    </source>
</evidence>
<evidence type="ECO:0000269" key="19">
    <source>
    </source>
</evidence>
<evidence type="ECO:0000269" key="20">
    <source>
    </source>
</evidence>
<evidence type="ECO:0000269" key="21">
    <source>
    </source>
</evidence>
<evidence type="ECO:0000269" key="22">
    <source>
    </source>
</evidence>
<evidence type="ECO:0000269" key="23">
    <source>
    </source>
</evidence>
<evidence type="ECO:0000269" key="24">
    <source>
    </source>
</evidence>
<evidence type="ECO:0000269" key="25">
    <source>
    </source>
</evidence>
<evidence type="ECO:0000269" key="26">
    <source>
    </source>
</evidence>
<evidence type="ECO:0000269" key="27">
    <source>
    </source>
</evidence>
<evidence type="ECO:0000269" key="28">
    <source>
    </source>
</evidence>
<evidence type="ECO:0000269" key="29">
    <source>
    </source>
</evidence>
<evidence type="ECO:0000269" key="30">
    <source>
    </source>
</evidence>
<evidence type="ECO:0000305" key="31"/>
<evidence type="ECO:0007744" key="32">
    <source>
    </source>
</evidence>
<proteinExistence type="evidence at protein level"/>
<accession>P38766</accession>
<accession>D3DKX8</accession>
<protein>
    <recommendedName>
        <fullName evidence="2">ATP-dependent DNA helicase RRM3</fullName>
        <ecNumber evidence="2 6">5.6.2.3</ecNumber>
    </recommendedName>
    <alternativeName>
        <fullName evidence="1">DNA 5'-3' helicase RRM3</fullName>
    </alternativeName>
    <alternativeName>
        <fullName>Regulation of Ty1 transposition protein 104</fullName>
    </alternativeName>
    <alternativeName>
        <fullName evidence="2">rDNA recombination mutation protein 3</fullName>
    </alternativeName>
</protein>
<gene>
    <name evidence="2" type="primary">RRM3</name>
    <name type="synonym">RTT104</name>
    <name type="ordered locus">YHR031C</name>
</gene>
<name>RRM3_YEAST</name>
<organism>
    <name type="scientific">Saccharomyces cerevisiae (strain ATCC 204508 / S288c)</name>
    <name type="common">Baker's yeast</name>
    <dbReference type="NCBI Taxonomy" id="559292"/>
    <lineage>
        <taxon>Eukaryota</taxon>
        <taxon>Fungi</taxon>
        <taxon>Dikarya</taxon>
        <taxon>Ascomycota</taxon>
        <taxon>Saccharomycotina</taxon>
        <taxon>Saccharomycetes</taxon>
        <taxon>Saccharomycetales</taxon>
        <taxon>Saccharomycetaceae</taxon>
        <taxon>Saccharomyces</taxon>
    </lineage>
</organism>
<reference key="1">
    <citation type="journal article" date="1994" name="Science">
        <title>Complete nucleotide sequence of Saccharomyces cerevisiae chromosome VIII.</title>
        <authorList>
            <person name="Johnston M."/>
            <person name="Andrews S."/>
            <person name="Brinkman R."/>
            <person name="Cooper J."/>
            <person name="Ding H."/>
            <person name="Dover J."/>
            <person name="Du Z."/>
            <person name="Favello A."/>
            <person name="Fulton L."/>
            <person name="Gattung S."/>
            <person name="Geisel C."/>
            <person name="Kirsten J."/>
            <person name="Kucaba T."/>
            <person name="Hillier L.W."/>
            <person name="Jier M."/>
            <person name="Johnston L."/>
            <person name="Langston Y."/>
            <person name="Latreille P."/>
            <person name="Louis E.J."/>
            <person name="Macri C."/>
            <person name="Mardis E."/>
            <person name="Menezes S."/>
            <person name="Mouser L."/>
            <person name="Nhan M."/>
            <person name="Rifkin L."/>
            <person name="Riles L."/>
            <person name="St Peter H."/>
            <person name="Trevaskis E."/>
            <person name="Vaughan K."/>
            <person name="Vignati D."/>
            <person name="Wilcox L."/>
            <person name="Wohldman P."/>
            <person name="Waterston R."/>
            <person name="Wilson R."/>
            <person name="Vaudin M."/>
        </authorList>
    </citation>
    <scope>NUCLEOTIDE SEQUENCE [LARGE SCALE GENOMIC DNA]</scope>
    <source>
        <strain>ATCC 204508 / S288c</strain>
    </source>
</reference>
<reference key="2">
    <citation type="journal article" date="2014" name="G3 (Bethesda)">
        <title>The reference genome sequence of Saccharomyces cerevisiae: Then and now.</title>
        <authorList>
            <person name="Engel S.R."/>
            <person name="Dietrich F.S."/>
            <person name="Fisk D.G."/>
            <person name="Binkley G."/>
            <person name="Balakrishnan R."/>
            <person name="Costanzo M.C."/>
            <person name="Dwight S.S."/>
            <person name="Hitz B.C."/>
            <person name="Karra K."/>
            <person name="Nash R.S."/>
            <person name="Weng S."/>
            <person name="Wong E.D."/>
            <person name="Lloyd P."/>
            <person name="Skrzypek M.S."/>
            <person name="Miyasato S.R."/>
            <person name="Simison M."/>
            <person name="Cherry J.M."/>
        </authorList>
    </citation>
    <scope>GENOME REANNOTATION</scope>
    <source>
        <strain>ATCC 204508 / S288c</strain>
    </source>
</reference>
<reference key="3">
    <citation type="journal article" date="1993" name="Genetics">
        <title>A gene with specific and global effects on recombination of sequences from tandemly repeated genes in Saccharomyces cerevisiae.</title>
        <authorList>
            <person name="Keil R.L."/>
            <person name="McWilliams A.D."/>
        </authorList>
    </citation>
    <scope>FUNCTION</scope>
</reference>
<reference key="4">
    <citation type="journal article" date="2000" name="Cell">
        <title>The Saccharomyces Pif1p DNA helicase and the highly related Rrm3p have opposite effects on replication fork progression in ribosomal DNA.</title>
        <authorList>
            <person name="Ivessa A.S."/>
            <person name="Zhou J.-Q."/>
            <person name="Zakian V.A."/>
        </authorList>
    </citation>
    <scope>FUNCTION</scope>
</reference>
<reference key="5">
    <citation type="journal article" date="2001" name="Genetics">
        <title>Multiple regulators of Ty1 transposition in Saccharomyces cerevisiae have conserved roles in genome maintenance.</title>
        <authorList>
            <person name="Scholes D.T."/>
            <person name="Banerjee M."/>
            <person name="Bowen B."/>
            <person name="Curcio M.J."/>
        </authorList>
    </citation>
    <scope>FUNCTION</scope>
</reference>
<reference key="6">
    <citation type="journal article" date="2002" name="Genes Dev.">
        <title>Saccharomyces Rrm3p, a 5' to 3' DNA helicase that promotes replication fork progression through telomeric and subtelomeric DNA.</title>
        <authorList>
            <person name="Ivessa A.S."/>
            <person name="Zhou J.Q."/>
            <person name="Schulz V.P."/>
            <person name="Monson E.K."/>
            <person name="Zakian V.A."/>
        </authorList>
    </citation>
    <scope>FUNCTION</scope>
    <scope>CATALYTIC ACTIVITY</scope>
    <scope>DNA-BINDING</scope>
</reference>
<reference key="7">
    <citation type="journal article" date="2002" name="J. Biol. Chem.">
        <title>Saccharomyces cerevisiae RRM3, a 5' to 3' DNA helicase, physically interacts with proliferating cell nuclear antigen.</title>
        <authorList>
            <person name="Schmidt K.H."/>
            <person name="Derry K.L."/>
            <person name="Kolodner R.D."/>
        </authorList>
    </citation>
    <scope>INTERACTION WITH POL30</scope>
    <scope>MUTAGENESIS OF PHE-41 AND PHE-42</scope>
</reference>
<reference key="8">
    <citation type="journal article" date="2003" name="J. Biol. Chem.">
        <title>Dna2 helicase/nuclease causes replicative fork stalling and double-strand breaks in the ribosomal DNA of Saccharomyces cerevisiae.</title>
        <authorList>
            <person name="Weitao T."/>
            <person name="Budd M."/>
            <person name="Hoopes L.L."/>
            <person name="Campbell J.L."/>
        </authorList>
    </citation>
    <scope>FUNCTION</scope>
</reference>
<reference key="9">
    <citation type="journal article" date="2003" name="Mol. Cell">
        <title>The Saccharomyces cerevisiae helicase Rrm3p facilitates replication past nonhistone protein-DNA complexes.</title>
        <authorList>
            <person name="Ivessa A.S."/>
            <person name="Lenzmeier B.A."/>
            <person name="Bessler J.B."/>
            <person name="Goudsouzian L.K."/>
            <person name="Schnakenberg S.L."/>
            <person name="Zakian V.A."/>
        </authorList>
    </citation>
    <scope>FUNCTION</scope>
</reference>
<reference key="10">
    <citation type="journal article" date="2003" name="Nature">
        <title>Global analysis of protein expression in yeast.</title>
        <authorList>
            <person name="Ghaemmaghami S."/>
            <person name="Huh W.-K."/>
            <person name="Bower K."/>
            <person name="Howson R.W."/>
            <person name="Belle A."/>
            <person name="Dephoure N."/>
            <person name="O'Shea E.K."/>
            <person name="Weissman J.S."/>
        </authorList>
    </citation>
    <scope>LEVEL OF PROTEIN EXPRESSION [LARGE SCALE ANALYSIS]</scope>
</reference>
<reference key="11">
    <citation type="journal article" date="2004" name="Genes Dev.">
        <title>Local chromatin structure at the ribosomal DNA causes replication fork pausing and genome instability in the absence of the S. cerevisiae DNA helicase Rrm3p.</title>
        <authorList>
            <person name="Torres J.Z."/>
            <person name="Bessler J.B."/>
            <person name="Zakian V.A."/>
        </authorList>
    </citation>
    <scope>FUNCTION</scope>
</reference>
<reference key="12">
    <citation type="journal article" date="2004" name="Genetics">
        <title>The amino terminus of the Saccharomyces cerevisiae DNA helicase Rrm3p modulates protein function altering replication and checkpoint activity.</title>
        <authorList>
            <person name="Bessler J.B."/>
            <person name="Zakian V.A."/>
        </authorList>
    </citation>
    <scope>FUNCTION</scope>
    <scope>DOMAIN</scope>
</reference>
<reference key="13">
    <citation type="journal article" date="2004" name="Mol. Cell. Biol.">
        <title>Saccharomyces cerevisiae Rrm3p DNA helicase promotes genome integrity by preventing replication fork stalling: viability of rrm3 cells requires the intra-S-phase checkpoint and fork restart activities.</title>
        <authorList>
            <person name="Torres J.Z."/>
            <person name="Schnakenberg S.L."/>
            <person name="Zakian V.A."/>
        </authorList>
    </citation>
    <scope>FUNCTION</scope>
</reference>
<reference key="14">
    <citation type="journal article" date="2004" name="Mol. Cell. Biol.">
        <title>Requirement of Rrm3 helicase for repair of spontaneous DNA lesions in cells lacking Srs2 or Sgs1 helicase.</title>
        <authorList>
            <person name="Schmidt K.H."/>
            <person name="Kolodner R.D."/>
        </authorList>
    </citation>
    <scope>FUNCTION</scope>
</reference>
<reference key="15">
    <citation type="journal article" date="2004" name="Mol. Cell. Biol.">
        <title>Anatomy and dynamics of DNA replication fork movement in yeast telomeric regions.</title>
        <authorList>
            <person name="Makovets S."/>
            <person name="Herskowitz I."/>
            <person name="Blackburn E.H."/>
        </authorList>
    </citation>
    <scope>FUNCTION</scope>
</reference>
<reference key="16">
    <citation type="journal article" date="2004" name="Mol. Cell. Biol.">
        <title>Diminished S-phase cyclin-dependent kinase function elicits vital Rad53-dependent checkpoint responses in Saccharomyces cerevisiae.</title>
        <authorList>
            <person name="Gibson D.G."/>
            <person name="Aparicio J.G."/>
            <person name="Hu F."/>
            <person name="Aparicio O.M."/>
        </authorList>
    </citation>
    <scope>FUNCTION</scope>
</reference>
<reference key="17">
    <citation type="journal article" date="2005" name="EMBO J.">
        <title>Impairment of replication fork progression mediates RNA polII transcription-associated recombination.</title>
        <authorList>
            <person name="Prado F."/>
            <person name="Aguilera A."/>
        </authorList>
    </citation>
    <scope>FUNCTION</scope>
</reference>
<reference key="18">
    <citation type="journal article" date="2005" name="Gene">
        <title>Differential involvement of the related DNA helicases Pif1p and Rrm3p in mtDNA point mutagenesis and stability.</title>
        <authorList>
            <person name="O'Rourke T.W."/>
            <person name="Doudican N.A."/>
            <person name="Zhang H."/>
            <person name="Eaton J.S."/>
            <person name="Doetsch P.W."/>
            <person name="Shadel G.S."/>
        </authorList>
    </citation>
    <scope>FUNCTION</scope>
</reference>
<reference key="19">
    <citation type="journal article" date="2005" name="Genes Dev.">
        <title>Molecular anatomy and regulation of a stable replisome at a paused eukaryotic DNA replication fork.</title>
        <authorList>
            <person name="Calzada A."/>
            <person name="Hodgson B."/>
            <person name="Kanemaki M."/>
            <person name="Bueno A."/>
            <person name="Labib K."/>
        </authorList>
    </citation>
    <scope>RECRUITMENT TO PAUSED REPLISOME</scope>
</reference>
<reference key="20">
    <citation type="journal article" date="2005" name="J. Biol. Chem.">
        <title>Def1p is involved in telomere maintenance in budding yeast.</title>
        <authorList>
            <person name="Chen Y.B."/>
            <person name="Yang C.P."/>
            <person name="Li R.X."/>
            <person name="Zeng R."/>
            <person name="Zhou J.Q."/>
        </authorList>
    </citation>
    <scope>INTERACTION WITH DEF1</scope>
</reference>
<reference key="21">
    <citation type="journal article" date="2005" name="Mol. Biol. Cell">
        <title>The conserved Mec1/Rad53 nuclear checkpoint pathway regulates mitochondrial DNA copy number in Saccharomyces cerevisiae.</title>
        <authorList>
            <person name="Taylor S.D."/>
            <person name="Zhang H."/>
            <person name="Eaton J.S."/>
            <person name="Rodeheffer M.S."/>
            <person name="Lebedeva M.A."/>
            <person name="O'rourke T.W."/>
            <person name="Siede W."/>
            <person name="Shadel G.S."/>
        </authorList>
    </citation>
    <scope>FUNCTION</scope>
</reference>
<reference key="22">
    <citation type="journal article" date="2005" name="Mol. Cell">
        <title>Mrc1 is required for normal progression of replication forks throughout chromatin in S. cerevisiae.</title>
        <authorList>
            <person name="Szyjka S.J."/>
            <person name="Viggiani C.J."/>
            <person name="Aparicio O.M."/>
        </authorList>
    </citation>
    <scope>FUNCTION</scope>
</reference>
<reference key="23">
    <citation type="journal article" date="2005" name="PLoS Genet.">
        <title>A network of multi-tasking proteins at the DNA replication fork preserves genome stability.</title>
        <authorList>
            <person name="Budd M.E."/>
            <person name="Tong A.H."/>
            <person name="Polaczek P."/>
            <person name="Peng X."/>
            <person name="Boone C."/>
            <person name="Campbell J.L."/>
        </authorList>
    </citation>
    <scope>FUNCTION</scope>
</reference>
<reference key="24">
    <citation type="journal article" date="2006" name="Curr. Biol.">
        <title>The cullin Rtt101p promotes replication fork progression through damaged DNA and natural pause sites.</title>
        <authorList>
            <person name="Luke B."/>
            <person name="Versini G."/>
            <person name="Jaquenoud M."/>
            <person name="Zaidi I.W."/>
            <person name="Kurz T."/>
            <person name="Pintard L."/>
            <person name="Pasero P."/>
            <person name="Peter M."/>
        </authorList>
    </citation>
    <scope>FUNCTION</scope>
</reference>
<reference key="25">
    <citation type="journal article" date="2006" name="Genes Dev.">
        <title>The S. cerevisiae Rrm3p DNA helicase moves with the replication fork and affects replication of all yeast chromosomes.</title>
        <authorList>
            <person name="Azvolinsky A."/>
            <person name="Dunaway S."/>
            <person name="Torres J.Z."/>
            <person name="Bessler J.B."/>
            <person name="Zakian V.A."/>
        </authorList>
    </citation>
    <scope>FUNCTION</scope>
    <scope>DNA-BINDING</scope>
</reference>
<reference key="26">
    <citation type="journal article" date="2008" name="Mol. Cell. Proteomics">
        <title>A multidimensional chromatography technology for in-depth phosphoproteome analysis.</title>
        <authorList>
            <person name="Albuquerque C.P."/>
            <person name="Smolka M.B."/>
            <person name="Payne S.H."/>
            <person name="Bafna V."/>
            <person name="Eng J."/>
            <person name="Zhou H."/>
        </authorList>
    </citation>
    <scope>PHOSPHORYLATION [LARGE SCALE ANALYSIS] AT SER-64</scope>
    <scope>IDENTIFICATION BY MASS SPECTROMETRY [LARGE SCALE ANALYSIS]</scope>
</reference>
<reference key="27">
    <citation type="journal article" date="2009" name="DNA Repair">
        <title>Stimulation of direct-repeat recombination by RNA polymerase III transcription.</title>
        <authorList>
            <person name="de la Loza M.C."/>
            <person name="Wellinger R.E."/>
            <person name="Aguilera A."/>
        </authorList>
    </citation>
    <scope>FUNCTION</scope>
</reference>
<reference key="28">
    <citation type="journal article" date="2009" name="Genetics">
        <title>Rrm3 protects the Saccharomyces cerevisiae genome from instability at nascent sites of retrotransposition.</title>
        <authorList>
            <person name="Stamenova R."/>
            <person name="Maxwell P.H."/>
            <person name="Kenny A.E."/>
            <person name="Curcio M.J."/>
        </authorList>
    </citation>
    <scope>FUNCTION</scope>
</reference>
<reference key="29">
    <citation type="journal article" date="2011" name="J. Biol. Chem.">
        <title>The intra-S phase checkpoint protein Tof1 collaborates with the helicase Rrm3 and the F-box protein Dia2 to maintain genome stability in Saccharomyces cerevisiae.</title>
        <authorList>
            <person name="Bairwa N.K."/>
            <person name="Mohanty B.K."/>
            <person name="Stamenova R."/>
            <person name="Curcio M.J."/>
            <person name="Bastia D."/>
        </authorList>
    </citation>
    <scope>FUNCTION</scope>
</reference>
<reference key="30">
    <citation type="journal article" date="2011" name="J. Cell Sci.">
        <title>Regulation of fragile sites expression in budding yeast by MEC1, RRM3 and hydroxyurea.</title>
        <authorList>
            <person name="Hashash N."/>
            <person name="Johnson A.L."/>
            <person name="Cha R.S."/>
        </authorList>
    </citation>
    <scope>FUNCTION</scope>
</reference>
<reference key="31">
    <citation type="journal article" date="2013" name="Nature">
        <title>Pif1 family helicases suppress genome instability at G-quadruplex motifs.</title>
        <authorList>
            <person name="Paeschke K."/>
            <person name="Bochman M.L."/>
            <person name="Garcia P.D."/>
            <person name="Cejka P."/>
            <person name="Friedman K.L."/>
            <person name="Kowalczykowski S.C."/>
            <person name="Zakian V.A."/>
        </authorList>
    </citation>
    <scope>FUNCTION IN G4-UNWINDING</scope>
</reference>
<feature type="chain" id="PRO_0000101986" description="ATP-dependent DNA helicase RRM3">
    <location>
        <begin position="1"/>
        <end position="723"/>
    </location>
</feature>
<feature type="DNA-binding region" evidence="2">
    <location>
        <begin position="682"/>
        <end position="701"/>
    </location>
</feature>
<feature type="region of interest" description="Disordered" evidence="3">
    <location>
        <begin position="1"/>
        <end position="31"/>
    </location>
</feature>
<feature type="region of interest" description="Disordered" evidence="3">
    <location>
        <begin position="61"/>
        <end position="101"/>
    </location>
</feature>
<feature type="compositionally biased region" description="Low complexity" evidence="3">
    <location>
        <begin position="83"/>
        <end position="96"/>
    </location>
</feature>
<feature type="binding site" evidence="2">
    <location>
        <begin position="254"/>
        <end position="261"/>
    </location>
    <ligand>
        <name>ATP</name>
        <dbReference type="ChEBI" id="CHEBI:30616"/>
    </ligand>
</feature>
<feature type="modified residue" description="Phosphoserine" evidence="32">
    <location>
        <position position="64"/>
    </location>
</feature>
<feature type="mutagenesis site" description="Reduces the interaction with POL30; when associated with A-42 or D-42." evidence="7">
    <original>F</original>
    <variation>A</variation>
    <variation>D</variation>
    <location>
        <position position="41"/>
    </location>
</feature>
<feature type="mutagenesis site" description="Reduces the interaction with POL30; when associated with A-42 or D-42." evidence="7">
    <original>F</original>
    <variation>A</variation>
    <variation>D</variation>
    <location>
        <position position="42"/>
    </location>
</feature>